<comment type="function">
    <text evidence="1">DNA-dependent RNA polymerase catalyzes the transcription of DNA into RNA using the four ribonucleoside triphosphates as substrates.</text>
</comment>
<comment type="catalytic activity">
    <reaction evidence="1">
        <text>RNA(n) + a ribonucleoside 5'-triphosphate = RNA(n+1) + diphosphate</text>
        <dbReference type="Rhea" id="RHEA:21248"/>
        <dbReference type="Rhea" id="RHEA-COMP:14527"/>
        <dbReference type="Rhea" id="RHEA-COMP:17342"/>
        <dbReference type="ChEBI" id="CHEBI:33019"/>
        <dbReference type="ChEBI" id="CHEBI:61557"/>
        <dbReference type="ChEBI" id="CHEBI:140395"/>
        <dbReference type="EC" id="2.7.7.6"/>
    </reaction>
</comment>
<comment type="subunit">
    <text evidence="1">In plastids the minimal PEP RNA polymerase catalytic core is composed of four subunits: alpha, beta, beta', and beta''. When a (nuclear-encoded) sigma factor is associated with the core the holoenzyme is formed, which can initiate transcription.</text>
</comment>
<comment type="subcellular location">
    <subcellularLocation>
        <location>Plastid</location>
        <location>Chloroplast</location>
    </subcellularLocation>
</comment>
<comment type="domain">
    <text evidence="1">The N-terminal domain is essential for RNAP assembly and basal transcription, whereas the C-terminal domain is involved in interaction with transcriptional regulators and with upstream promoter elements.</text>
</comment>
<comment type="similarity">
    <text evidence="1">Belongs to the RNA polymerase alpha chain family.</text>
</comment>
<dbReference type="EC" id="2.7.7.6" evidence="1"/>
<dbReference type="EMBL" id="AJ627251">
    <property type="protein sequence ID" value="CAF28626.1"/>
    <property type="molecule type" value="Genomic_DNA"/>
</dbReference>
<dbReference type="RefSeq" id="YP_053186.1">
    <property type="nucleotide sequence ID" value="NC_006050.1"/>
</dbReference>
<dbReference type="SMR" id="Q6EW20"/>
<dbReference type="GeneID" id="2896154"/>
<dbReference type="GO" id="GO:0009507">
    <property type="term" value="C:chloroplast"/>
    <property type="evidence" value="ECO:0007669"/>
    <property type="project" value="UniProtKB-SubCell"/>
</dbReference>
<dbReference type="GO" id="GO:0000428">
    <property type="term" value="C:DNA-directed RNA polymerase complex"/>
    <property type="evidence" value="ECO:0007669"/>
    <property type="project" value="UniProtKB-KW"/>
</dbReference>
<dbReference type="GO" id="GO:0005739">
    <property type="term" value="C:mitochondrion"/>
    <property type="evidence" value="ECO:0007669"/>
    <property type="project" value="GOC"/>
</dbReference>
<dbReference type="GO" id="GO:0003677">
    <property type="term" value="F:DNA binding"/>
    <property type="evidence" value="ECO:0007669"/>
    <property type="project" value="UniProtKB-UniRule"/>
</dbReference>
<dbReference type="GO" id="GO:0003899">
    <property type="term" value="F:DNA-directed RNA polymerase activity"/>
    <property type="evidence" value="ECO:0007669"/>
    <property type="project" value="UniProtKB-UniRule"/>
</dbReference>
<dbReference type="GO" id="GO:0046983">
    <property type="term" value="F:protein dimerization activity"/>
    <property type="evidence" value="ECO:0007669"/>
    <property type="project" value="InterPro"/>
</dbReference>
<dbReference type="GO" id="GO:0006351">
    <property type="term" value="P:DNA-templated transcription"/>
    <property type="evidence" value="ECO:0007669"/>
    <property type="project" value="UniProtKB-UniRule"/>
</dbReference>
<dbReference type="CDD" id="cd06928">
    <property type="entry name" value="RNAP_alpha_NTD"/>
    <property type="match status" value="1"/>
</dbReference>
<dbReference type="FunFam" id="1.10.150.20:FF:000021">
    <property type="entry name" value="DNA-directed RNA polymerase subunit alpha"/>
    <property type="match status" value="1"/>
</dbReference>
<dbReference type="FunFam" id="2.170.120.12:FF:000001">
    <property type="entry name" value="DNA-directed RNA polymerase subunit alpha"/>
    <property type="match status" value="1"/>
</dbReference>
<dbReference type="FunFam" id="3.30.1360.10:FF:000039">
    <property type="entry name" value="DNA-directed RNA polymerase subunit alpha"/>
    <property type="match status" value="1"/>
</dbReference>
<dbReference type="Gene3D" id="1.10.150.20">
    <property type="entry name" value="5' to 3' exonuclease, C-terminal subdomain"/>
    <property type="match status" value="1"/>
</dbReference>
<dbReference type="Gene3D" id="2.170.120.12">
    <property type="entry name" value="DNA-directed RNA polymerase, insert domain"/>
    <property type="match status" value="1"/>
</dbReference>
<dbReference type="Gene3D" id="3.30.1360.10">
    <property type="entry name" value="RNA polymerase, RBP11-like subunit"/>
    <property type="match status" value="1"/>
</dbReference>
<dbReference type="HAMAP" id="MF_00059">
    <property type="entry name" value="RNApol_bact_RpoA"/>
    <property type="match status" value="1"/>
</dbReference>
<dbReference type="InterPro" id="IPR011262">
    <property type="entry name" value="DNA-dir_RNA_pol_insert"/>
</dbReference>
<dbReference type="InterPro" id="IPR011263">
    <property type="entry name" value="DNA-dir_RNA_pol_RpoA/D/Rpb3"/>
</dbReference>
<dbReference type="InterPro" id="IPR011773">
    <property type="entry name" value="DNA-dir_RpoA"/>
</dbReference>
<dbReference type="InterPro" id="IPR036603">
    <property type="entry name" value="RBP11-like"/>
</dbReference>
<dbReference type="InterPro" id="IPR011260">
    <property type="entry name" value="RNAP_asu_C"/>
</dbReference>
<dbReference type="InterPro" id="IPR036643">
    <property type="entry name" value="RNApol_insert_sf"/>
</dbReference>
<dbReference type="NCBIfam" id="TIGR02027">
    <property type="entry name" value="rpoA"/>
    <property type="match status" value="1"/>
</dbReference>
<dbReference type="Pfam" id="PF01000">
    <property type="entry name" value="RNA_pol_A_bac"/>
    <property type="match status" value="1"/>
</dbReference>
<dbReference type="Pfam" id="PF03118">
    <property type="entry name" value="RNA_pol_A_CTD"/>
    <property type="match status" value="1"/>
</dbReference>
<dbReference type="Pfam" id="PF01193">
    <property type="entry name" value="RNA_pol_L"/>
    <property type="match status" value="1"/>
</dbReference>
<dbReference type="SMART" id="SM00662">
    <property type="entry name" value="RPOLD"/>
    <property type="match status" value="1"/>
</dbReference>
<dbReference type="SUPFAM" id="SSF47789">
    <property type="entry name" value="C-terminal domain of RNA polymerase alpha subunit"/>
    <property type="match status" value="1"/>
</dbReference>
<dbReference type="SUPFAM" id="SSF56553">
    <property type="entry name" value="Insert subdomain of RNA polymerase alpha subunit"/>
    <property type="match status" value="1"/>
</dbReference>
<dbReference type="SUPFAM" id="SSF55257">
    <property type="entry name" value="RBP11-like subunits of RNA polymerase"/>
    <property type="match status" value="1"/>
</dbReference>
<evidence type="ECO:0000255" key="1">
    <source>
        <dbReference type="HAMAP-Rule" id="MF_00059"/>
    </source>
</evidence>
<feature type="chain" id="PRO_0000175473" description="DNA-directed RNA polymerase subunit alpha">
    <location>
        <begin position="1"/>
        <end position="341"/>
    </location>
</feature>
<feature type="region of interest" description="Alpha N-terminal domain (alpha-NTD)" evidence="1">
    <location>
        <begin position="1"/>
        <end position="233"/>
    </location>
</feature>
<feature type="region of interest" description="Alpha C-terminal domain (alpha-CTD)" evidence="1">
    <location>
        <begin position="266"/>
        <end position="341"/>
    </location>
</feature>
<geneLocation type="chloroplast"/>
<keyword id="KW-0150">Chloroplast</keyword>
<keyword id="KW-0240">DNA-directed RNA polymerase</keyword>
<keyword id="KW-0548">Nucleotidyltransferase</keyword>
<keyword id="KW-0934">Plastid</keyword>
<keyword id="KW-0804">Transcription</keyword>
<keyword id="KW-0808">Transferase</keyword>
<accession>Q6EW20</accession>
<organism>
    <name type="scientific">Nymphaea alba</name>
    <name type="common">White water-lily</name>
    <name type="synonym">Castalia alba</name>
    <dbReference type="NCBI Taxonomy" id="34301"/>
    <lineage>
        <taxon>Eukaryota</taxon>
        <taxon>Viridiplantae</taxon>
        <taxon>Streptophyta</taxon>
        <taxon>Embryophyta</taxon>
        <taxon>Tracheophyta</taxon>
        <taxon>Spermatophyta</taxon>
        <taxon>Magnoliopsida</taxon>
        <taxon>Nymphaeales</taxon>
        <taxon>Nymphaeaceae</taxon>
        <taxon>Nymphaea</taxon>
    </lineage>
</organism>
<name>RPOA_NYMAL</name>
<protein>
    <recommendedName>
        <fullName evidence="1">DNA-directed RNA polymerase subunit alpha</fullName>
        <shortName evidence="1">PEP</shortName>
        <ecNumber evidence="1">2.7.7.6</ecNumber>
    </recommendedName>
    <alternativeName>
        <fullName evidence="1">Plastid-encoded RNA polymerase subunit alpha</fullName>
        <shortName evidence="1">RNA polymerase subunit alpha</shortName>
    </alternativeName>
</protein>
<gene>
    <name evidence="1" type="primary">rpoA</name>
</gene>
<proteinExistence type="inferred from homology"/>
<sequence>MVREEVPVSTRTLQWKCVESRADSKRLYYGRFVLSPLMKGQADTIGIAMRRALLGELEGTCITRAKSDKVPHEYSTVVGIEESVHEILMNLKKMVFRSDLYGTLDASICVRGPRHVTAQDIISPPSVEIVDTTQHIAVLTEPVDLCIELKIERGRGYCTRTQNNYQDGSYPIDAVSMPVRNANHSIHSYGNGNEKQEILFLEIWTNGSLTPKEALYEASRNLIDLFIPFLHAEEQDINRNMEDNLKRASVPFFAFDDGLDNIKREIILKRIFIDQLELPPRTYNCLKRSNIHTLLDLLSKSQEDLMRIEHFRVEDVKQIFDILQKGFTIDLLKNSNQFESR</sequence>
<reference key="1">
    <citation type="journal article" date="2004" name="Mol. Biol. Evol.">
        <title>The chloroplast genome of Nymphaea alba: whole-genome analyses and the problem of identifying the most basal angiosperm.</title>
        <authorList>
            <person name="Goremykin V.V."/>
            <person name="Hirsch-Ernst K.I."/>
            <person name="Woelfl S."/>
            <person name="Hellwig F.H."/>
        </authorList>
    </citation>
    <scope>NUCLEOTIDE SEQUENCE [LARGE SCALE GENOMIC DNA]</scope>
</reference>